<sequence>MSKLGKFFKGSRSSRARAAPSAQEALARLREIEEMMAKKQEYLENRIQRELALAKKHGSQNKRAALQALKRKKRFEKQLTQIDGTLSTIEFQREALENSHTNTEVLRNMGFAAKAMKAVHENMDLNKIDDLMQDITEQQDIAQEISEAFSQRVQFADGFDEDELLAELEELEQEELNKKMTSMELPNVPSSSLPAQPSRKAGVPSSVHRSRAASSRRAEEDDDFKQLAAWAT</sequence>
<evidence type="ECO:0000250" key="1"/>
<evidence type="ECO:0000250" key="2">
    <source>
        <dbReference type="UniProtKB" id="Q96CF2"/>
    </source>
</evidence>
<evidence type="ECO:0000255" key="3"/>
<evidence type="ECO:0000256" key="4">
    <source>
        <dbReference type="SAM" id="MobiDB-lite"/>
    </source>
</evidence>
<evidence type="ECO:0000305" key="5"/>
<name>CHM4C_RAT</name>
<dbReference type="EMBL" id="BC092576">
    <property type="protein sequence ID" value="AAH92576.1"/>
    <property type="molecule type" value="mRNA"/>
</dbReference>
<dbReference type="RefSeq" id="NP_001017466.2">
    <property type="nucleotide sequence ID" value="NM_001017466.2"/>
</dbReference>
<dbReference type="SMR" id="Q569C1"/>
<dbReference type="FunCoup" id="Q569C1">
    <property type="interactions" value="1337"/>
</dbReference>
<dbReference type="STRING" id="10116.ENSRNOP00000013720"/>
<dbReference type="PhosphoSitePlus" id="Q569C1"/>
<dbReference type="PaxDb" id="10116-ENSRNOP00000013720"/>
<dbReference type="GeneID" id="361916"/>
<dbReference type="KEGG" id="rno:361916"/>
<dbReference type="UCSC" id="RGD:1564543">
    <property type="organism name" value="rat"/>
</dbReference>
<dbReference type="AGR" id="RGD:1564543"/>
<dbReference type="CTD" id="92421"/>
<dbReference type="RGD" id="1564543">
    <property type="gene designation" value="Chmp4c"/>
</dbReference>
<dbReference type="eggNOG" id="KOG1656">
    <property type="taxonomic scope" value="Eukaryota"/>
</dbReference>
<dbReference type="InParanoid" id="Q569C1"/>
<dbReference type="OrthoDB" id="87327at9989"/>
<dbReference type="PhylomeDB" id="Q569C1"/>
<dbReference type="Reactome" id="R-RNO-1632852">
    <property type="pathway name" value="Macroautophagy"/>
</dbReference>
<dbReference type="Reactome" id="R-RNO-5620971">
    <property type="pathway name" value="Pyroptosis"/>
</dbReference>
<dbReference type="Reactome" id="R-RNO-917729">
    <property type="pathway name" value="Endosomal Sorting Complex Required For Transport (ESCRT)"/>
</dbReference>
<dbReference type="Reactome" id="R-RNO-9668328">
    <property type="pathway name" value="Sealing of the nuclear envelope (NE) by ESCRT-III"/>
</dbReference>
<dbReference type="PRO" id="PR:Q569C1"/>
<dbReference type="Proteomes" id="UP000002494">
    <property type="component" value="Unplaced"/>
</dbReference>
<dbReference type="GO" id="GO:1904930">
    <property type="term" value="C:amphisome membrane"/>
    <property type="evidence" value="ECO:0000266"/>
    <property type="project" value="RGD"/>
</dbReference>
<dbReference type="GO" id="GO:0000421">
    <property type="term" value="C:autophagosome membrane"/>
    <property type="evidence" value="ECO:0000266"/>
    <property type="project" value="RGD"/>
</dbReference>
<dbReference type="GO" id="GO:0009898">
    <property type="term" value="C:cytoplasmic side of plasma membrane"/>
    <property type="evidence" value="ECO:0000318"/>
    <property type="project" value="GO_Central"/>
</dbReference>
<dbReference type="GO" id="GO:0005829">
    <property type="term" value="C:cytosol"/>
    <property type="evidence" value="ECO:0007669"/>
    <property type="project" value="UniProtKB-SubCell"/>
</dbReference>
<dbReference type="GO" id="GO:0000815">
    <property type="term" value="C:ESCRT III complex"/>
    <property type="evidence" value="ECO:0000318"/>
    <property type="project" value="GO_Central"/>
</dbReference>
<dbReference type="GO" id="GO:0090543">
    <property type="term" value="C:Flemming body"/>
    <property type="evidence" value="ECO:0000266"/>
    <property type="project" value="RGD"/>
</dbReference>
<dbReference type="GO" id="GO:0000776">
    <property type="term" value="C:kinetochore"/>
    <property type="evidence" value="ECO:0000266"/>
    <property type="project" value="RGD"/>
</dbReference>
<dbReference type="GO" id="GO:0005828">
    <property type="term" value="C:kinetochore microtubule"/>
    <property type="evidence" value="ECO:0000266"/>
    <property type="project" value="RGD"/>
</dbReference>
<dbReference type="GO" id="GO:0005765">
    <property type="term" value="C:lysosomal membrane"/>
    <property type="evidence" value="ECO:0000266"/>
    <property type="project" value="RGD"/>
</dbReference>
<dbReference type="GO" id="GO:0030496">
    <property type="term" value="C:midbody"/>
    <property type="evidence" value="ECO:0000266"/>
    <property type="project" value="RGD"/>
</dbReference>
<dbReference type="GO" id="GO:0005771">
    <property type="term" value="C:multivesicular body"/>
    <property type="evidence" value="ECO:0000318"/>
    <property type="project" value="GO_Central"/>
</dbReference>
<dbReference type="GO" id="GO:0032585">
    <property type="term" value="C:multivesicular body membrane"/>
    <property type="evidence" value="ECO:0000266"/>
    <property type="project" value="RGD"/>
</dbReference>
<dbReference type="GO" id="GO:0005643">
    <property type="term" value="C:nuclear pore"/>
    <property type="evidence" value="ECO:0000266"/>
    <property type="project" value="RGD"/>
</dbReference>
<dbReference type="GO" id="GO:0005886">
    <property type="term" value="C:plasma membrane"/>
    <property type="evidence" value="ECO:0000266"/>
    <property type="project" value="RGD"/>
</dbReference>
<dbReference type="GO" id="GO:0042803">
    <property type="term" value="F:protein homodimerization activity"/>
    <property type="evidence" value="ECO:0000266"/>
    <property type="project" value="RGD"/>
</dbReference>
<dbReference type="GO" id="GO:0097352">
    <property type="term" value="P:autophagosome maturation"/>
    <property type="evidence" value="ECO:0000266"/>
    <property type="project" value="RGD"/>
</dbReference>
<dbReference type="GO" id="GO:0006914">
    <property type="term" value="P:autophagy"/>
    <property type="evidence" value="ECO:0000266"/>
    <property type="project" value="RGD"/>
</dbReference>
<dbReference type="GO" id="GO:1902774">
    <property type="term" value="P:late endosome to lysosome transport"/>
    <property type="evidence" value="ECO:0000266"/>
    <property type="project" value="RGD"/>
</dbReference>
<dbReference type="GO" id="GO:0032511">
    <property type="term" value="P:late endosome to vacuole transport via multivesicular body sorting pathway"/>
    <property type="evidence" value="ECO:0000318"/>
    <property type="project" value="GO_Central"/>
</dbReference>
<dbReference type="GO" id="GO:0061952">
    <property type="term" value="P:midbody abscission"/>
    <property type="evidence" value="ECO:0000250"/>
    <property type="project" value="UniProtKB"/>
</dbReference>
<dbReference type="GO" id="GO:0044878">
    <property type="term" value="P:mitotic cytokinesis checkpoint signaling"/>
    <property type="evidence" value="ECO:0000250"/>
    <property type="project" value="UniProtKB"/>
</dbReference>
<dbReference type="GO" id="GO:0007080">
    <property type="term" value="P:mitotic metaphase chromosome alignment"/>
    <property type="evidence" value="ECO:0000266"/>
    <property type="project" value="RGD"/>
</dbReference>
<dbReference type="GO" id="GO:0071985">
    <property type="term" value="P:multivesicular body sorting pathway"/>
    <property type="evidence" value="ECO:0000266"/>
    <property type="project" value="RGD"/>
</dbReference>
<dbReference type="GO" id="GO:0032466">
    <property type="term" value="P:negative regulation of cytokinesis"/>
    <property type="evidence" value="ECO:0000250"/>
    <property type="project" value="UniProtKB"/>
</dbReference>
<dbReference type="GO" id="GO:0031468">
    <property type="term" value="P:nuclear membrane reassembly"/>
    <property type="evidence" value="ECO:0000266"/>
    <property type="project" value="RGD"/>
</dbReference>
<dbReference type="GO" id="GO:0006997">
    <property type="term" value="P:nucleus organization"/>
    <property type="evidence" value="ECO:0000266"/>
    <property type="project" value="RGD"/>
</dbReference>
<dbReference type="GO" id="GO:0001778">
    <property type="term" value="P:plasma membrane repair"/>
    <property type="evidence" value="ECO:0000266"/>
    <property type="project" value="RGD"/>
</dbReference>
<dbReference type="GO" id="GO:0015031">
    <property type="term" value="P:protein transport"/>
    <property type="evidence" value="ECO:0007669"/>
    <property type="project" value="UniProtKB-KW"/>
</dbReference>
<dbReference type="GO" id="GO:0010824">
    <property type="term" value="P:regulation of centrosome duplication"/>
    <property type="evidence" value="ECO:0000266"/>
    <property type="project" value="RGD"/>
</dbReference>
<dbReference type="GO" id="GO:1901673">
    <property type="term" value="P:regulation of mitotic spindle assembly"/>
    <property type="evidence" value="ECO:0000266"/>
    <property type="project" value="RGD"/>
</dbReference>
<dbReference type="GO" id="GO:0043162">
    <property type="term" value="P:ubiquitin-dependent protein catabolic process via the multivesicular body sorting pathway"/>
    <property type="evidence" value="ECO:0000266"/>
    <property type="project" value="RGD"/>
</dbReference>
<dbReference type="GO" id="GO:0090611">
    <property type="term" value="P:ubiquitin-independent protein catabolic process via the multivesicular body sorting pathway"/>
    <property type="evidence" value="ECO:0000266"/>
    <property type="project" value="RGD"/>
</dbReference>
<dbReference type="GO" id="GO:0006900">
    <property type="term" value="P:vesicle budding from membrane"/>
    <property type="evidence" value="ECO:0000318"/>
    <property type="project" value="GO_Central"/>
</dbReference>
<dbReference type="GO" id="GO:0046761">
    <property type="term" value="P:viral budding from plasma membrane"/>
    <property type="evidence" value="ECO:0000266"/>
    <property type="project" value="RGD"/>
</dbReference>
<dbReference type="GO" id="GO:0039702">
    <property type="term" value="P:viral budding via host ESCRT complex"/>
    <property type="evidence" value="ECO:0000266"/>
    <property type="project" value="RGD"/>
</dbReference>
<dbReference type="FunFam" id="1.10.287.1060:FF:000001">
    <property type="entry name" value="Charged multivesicular body protein 4b"/>
    <property type="match status" value="1"/>
</dbReference>
<dbReference type="Gene3D" id="6.10.250.1710">
    <property type="match status" value="1"/>
</dbReference>
<dbReference type="Gene3D" id="1.10.287.1060">
    <property type="entry name" value="ESAT-6-like"/>
    <property type="match status" value="1"/>
</dbReference>
<dbReference type="InterPro" id="IPR005024">
    <property type="entry name" value="Snf7_fam"/>
</dbReference>
<dbReference type="PANTHER" id="PTHR22761">
    <property type="entry name" value="CHARGED MULTIVESICULAR BODY PROTEIN"/>
    <property type="match status" value="1"/>
</dbReference>
<dbReference type="PANTHER" id="PTHR22761:SF77">
    <property type="entry name" value="CHARGED MULTIVESICULAR BODY PROTEIN 4C"/>
    <property type="match status" value="1"/>
</dbReference>
<dbReference type="Pfam" id="PF03357">
    <property type="entry name" value="Snf7"/>
    <property type="match status" value="1"/>
</dbReference>
<accession>Q569C1</accession>
<reference key="1">
    <citation type="journal article" date="2004" name="Genome Res.">
        <title>The status, quality, and expansion of the NIH full-length cDNA project: the Mammalian Gene Collection (MGC).</title>
        <authorList>
            <consortium name="The MGC Project Team"/>
        </authorList>
    </citation>
    <scope>NUCLEOTIDE SEQUENCE [LARGE SCALE MRNA]</scope>
    <source>
        <tissue>Lung</tissue>
    </source>
</reference>
<gene>
    <name type="primary">Chmp4c</name>
</gene>
<organism>
    <name type="scientific">Rattus norvegicus</name>
    <name type="common">Rat</name>
    <dbReference type="NCBI Taxonomy" id="10116"/>
    <lineage>
        <taxon>Eukaryota</taxon>
        <taxon>Metazoa</taxon>
        <taxon>Chordata</taxon>
        <taxon>Craniata</taxon>
        <taxon>Vertebrata</taxon>
        <taxon>Euteleostomi</taxon>
        <taxon>Mammalia</taxon>
        <taxon>Eutheria</taxon>
        <taxon>Euarchontoglires</taxon>
        <taxon>Glires</taxon>
        <taxon>Rodentia</taxon>
        <taxon>Myomorpha</taxon>
        <taxon>Muroidea</taxon>
        <taxon>Muridae</taxon>
        <taxon>Murinae</taxon>
        <taxon>Rattus</taxon>
    </lineage>
</organism>
<feature type="chain" id="PRO_0000211497" description="Charged multivesicular body protein 4c">
    <location>
        <begin position="1"/>
        <end position="232"/>
    </location>
</feature>
<feature type="region of interest" description="Intramolecular interaction with C-terminus" evidence="1">
    <location>
        <begin position="1"/>
        <end position="153"/>
    </location>
</feature>
<feature type="region of interest" description="Disordered" evidence="4">
    <location>
        <begin position="1"/>
        <end position="23"/>
    </location>
</feature>
<feature type="region of interest" description="Intramolecular interaction with N-terminus" evidence="1">
    <location>
        <begin position="154"/>
        <end position="232"/>
    </location>
</feature>
<feature type="region of interest" description="Disordered" evidence="4">
    <location>
        <begin position="172"/>
        <end position="232"/>
    </location>
</feature>
<feature type="coiled-coil region" evidence="3">
    <location>
        <begin position="21"/>
        <end position="50"/>
    </location>
</feature>
<feature type="coiled-coil region" evidence="3">
    <location>
        <begin position="125"/>
        <end position="182"/>
    </location>
</feature>
<feature type="compositionally biased region" description="Low complexity" evidence="4">
    <location>
        <begin position="11"/>
        <end position="23"/>
    </location>
</feature>
<feature type="modified residue" description="Phosphoserine; by AURKB" evidence="2">
    <location>
        <position position="210"/>
    </location>
</feature>
<protein>
    <recommendedName>
        <fullName>Charged multivesicular body protein 4c</fullName>
    </recommendedName>
    <alternativeName>
        <fullName>Chromatin-modifying protein 4c</fullName>
        <shortName>CHMP4c</shortName>
    </alternativeName>
</protein>
<keyword id="KW-0175">Coiled coil</keyword>
<keyword id="KW-0963">Cytoplasm</keyword>
<keyword id="KW-0967">Endosome</keyword>
<keyword id="KW-0472">Membrane</keyword>
<keyword id="KW-0597">Phosphoprotein</keyword>
<keyword id="KW-0653">Protein transport</keyword>
<keyword id="KW-1185">Reference proteome</keyword>
<keyword id="KW-0813">Transport</keyword>
<proteinExistence type="evidence at transcript level"/>
<comment type="function">
    <text evidence="2">Probable core component of the endosomal sorting required for transport complex III (ESCRT-III) which is involved in multivesicular bodies (MVBs) formation and sorting of endosomal cargo proteins into MVBs. MVBs contain intraluminal vesicles (ILVs) that are generated by invagination and scission from the limiting membrane of the endosome and mostly are delivered to lysosomes enabling degradation of membrane proteins, such as stimulated growth factor receptors, lysosomal enzymes and lipids. The MVB pathway appears to require the sequential function of ESCRT-O, -I,-II and -III complexes. ESCRT-III proteins mostly dissociate from the invaginating membrane before the ILV is released. The ESCRT machinery also functions in topologically equivalent membrane fission events, such as the terminal stages of cytokinesis. Key component of the cytokinesis checkpoint, a process required to delay abscission to prevent both premature resolution of intercellular chromosome bridges and accumulation of DNA damage: upon phosphorylation by AURKB, together with ZFYVE19/ANCHR, retains abscission-competent VPS4 (VPS4A and/or VPS4B) at the midbody ring until abscission checkpoint signaling is terminated at late cytokinesis. Deactivation of AURKB results in dephosphorylation of CHMP4C followed by its dissociation from ANCHR and VPS4 and subsequent abscission. ESCRT-III proteins are believed to mediate the necessary vesicle extrusion and/or membrane fission activities, possibly in conjunction with the AAA ATPase VPS4. CHMP4A/B/C are required for the exosomal release of SDCBP, CD63 and syndecan (By similarity).</text>
</comment>
<comment type="subunit">
    <text evidence="2">Probable core component of the endosomal sorting required for transport complex III (ESCRT-III). ESCRT-III components are thought to multimerize to form a flat lattice on the perimeter membrane of the endosome. Several assembly forms of ESCRT-III may exist that interact and act sequentially. Self-associates. Interacts with CHMP2A. Interacts with CHMP4A. Interacts with CHMP4B. Interacts with CHMP6. Interacts with VPS4A. Interacts with PDCD6IP; the interaction is direct (By similarity).</text>
</comment>
<comment type="subcellular location">
    <subcellularLocation>
        <location evidence="1">Cytoplasm</location>
        <location evidence="1">Cytosol</location>
    </subcellularLocation>
    <subcellularLocation>
        <location evidence="2">Late endosome membrane</location>
        <topology evidence="2">Peripheral membrane protein</topology>
    </subcellularLocation>
    <subcellularLocation>
        <location evidence="2">Midbody</location>
        <location evidence="2">Midbody ring</location>
    </subcellularLocation>
    <text evidence="2">Localizes to the midbody during late cytokinesis. During its recruitment, localizes initially to the midbody arms, before being directed to the central region, the midbody ring, also called Flemming body. Phosphorylation at Ser-210 by AURKB triggers localization to midbody ring.</text>
</comment>
<comment type="domain">
    <text evidence="1">The acidic C-terminus and the basic N-terminus are thought to render the protein in a closed, soluble and inactive conformation through an autoinhibitory intramolecular interaction. The open and active conformation, which enables membrane binding and oligomerization, is achieved by interaction with other cellular binding partners, probably including other ESCRT components (By similarity).</text>
</comment>
<comment type="PTM">
    <text evidence="2">Phosphorylated at Ser-210 by AURKB during cytokinesis: together with ZFYVE19/ANCHR, phosphorylated CHMP4C retains abscission-competent VPS4 (VPS4A and/or VPS4B) at the midbody ring until abscission checkpoint signaling is terminated at late cytokinesis.</text>
</comment>
<comment type="similarity">
    <text evidence="5">Belongs to the SNF7 family.</text>
</comment>